<organism>
    <name type="scientific">Leptothrix cholodnii (strain ATCC 51168 / LMG 8142 / SP-6)</name>
    <name type="common">Leptothrix discophora (strain SP-6)</name>
    <dbReference type="NCBI Taxonomy" id="395495"/>
    <lineage>
        <taxon>Bacteria</taxon>
        <taxon>Pseudomonadati</taxon>
        <taxon>Pseudomonadota</taxon>
        <taxon>Betaproteobacteria</taxon>
        <taxon>Burkholderiales</taxon>
        <taxon>Sphaerotilaceae</taxon>
        <taxon>Leptothrix</taxon>
    </lineage>
</organism>
<reference key="1">
    <citation type="submission" date="2008-03" db="EMBL/GenBank/DDBJ databases">
        <title>Complete sequence of Leptothrix cholodnii SP-6.</title>
        <authorList>
            <consortium name="US DOE Joint Genome Institute"/>
            <person name="Copeland A."/>
            <person name="Lucas S."/>
            <person name="Lapidus A."/>
            <person name="Glavina del Rio T."/>
            <person name="Dalin E."/>
            <person name="Tice H."/>
            <person name="Bruce D."/>
            <person name="Goodwin L."/>
            <person name="Pitluck S."/>
            <person name="Chertkov O."/>
            <person name="Brettin T."/>
            <person name="Detter J.C."/>
            <person name="Han C."/>
            <person name="Kuske C.R."/>
            <person name="Schmutz J."/>
            <person name="Larimer F."/>
            <person name="Land M."/>
            <person name="Hauser L."/>
            <person name="Kyrpides N."/>
            <person name="Lykidis A."/>
            <person name="Emerson D."/>
            <person name="Richardson P."/>
        </authorList>
    </citation>
    <scope>NUCLEOTIDE SEQUENCE [LARGE SCALE GENOMIC DNA]</scope>
    <source>
        <strain>ATCC 51168 / LMG 8142 / SP-6</strain>
    </source>
</reference>
<protein>
    <recommendedName>
        <fullName evidence="1">LexA repressor</fullName>
        <ecNumber evidence="1">3.4.21.88</ecNumber>
    </recommendedName>
</protein>
<name>LEXA_LEPCP</name>
<gene>
    <name evidence="1" type="primary">lexA</name>
    <name type="ordered locus">Lcho_2082</name>
</gene>
<feature type="chain" id="PRO_1000089576" description="LexA repressor">
    <location>
        <begin position="1"/>
        <end position="231"/>
    </location>
</feature>
<feature type="DNA-binding region" description="H-T-H motif" evidence="1">
    <location>
        <begin position="31"/>
        <end position="51"/>
    </location>
</feature>
<feature type="active site" description="For autocatalytic cleavage activity" evidence="1">
    <location>
        <position position="148"/>
    </location>
</feature>
<feature type="active site" description="For autocatalytic cleavage activity" evidence="1">
    <location>
        <position position="185"/>
    </location>
</feature>
<feature type="site" description="Cleavage; by autolysis" evidence="1">
    <location>
        <begin position="113"/>
        <end position="114"/>
    </location>
</feature>
<accession>B1Y250</accession>
<keyword id="KW-0068">Autocatalytic cleavage</keyword>
<keyword id="KW-0227">DNA damage</keyword>
<keyword id="KW-0234">DNA repair</keyword>
<keyword id="KW-0235">DNA replication</keyword>
<keyword id="KW-0238">DNA-binding</keyword>
<keyword id="KW-0378">Hydrolase</keyword>
<keyword id="KW-1185">Reference proteome</keyword>
<keyword id="KW-0678">Repressor</keyword>
<keyword id="KW-0742">SOS response</keyword>
<keyword id="KW-0804">Transcription</keyword>
<keyword id="KW-0805">Transcription regulation</keyword>
<proteinExistence type="inferred from homology"/>
<comment type="function">
    <text evidence="1">Represses a number of genes involved in the response to DNA damage (SOS response), including recA and lexA. In the presence of single-stranded DNA, RecA interacts with LexA causing an autocatalytic cleavage which disrupts the DNA-binding part of LexA, leading to derepression of the SOS regulon and eventually DNA repair.</text>
</comment>
<comment type="catalytic activity">
    <reaction evidence="1">
        <text>Hydrolysis of Ala-|-Gly bond in repressor LexA.</text>
        <dbReference type="EC" id="3.4.21.88"/>
    </reaction>
</comment>
<comment type="subunit">
    <text evidence="1">Homodimer.</text>
</comment>
<comment type="similarity">
    <text evidence="1">Belongs to the peptidase S24 family.</text>
</comment>
<evidence type="ECO:0000255" key="1">
    <source>
        <dbReference type="HAMAP-Rule" id="MF_00015"/>
    </source>
</evidence>
<dbReference type="EC" id="3.4.21.88" evidence="1"/>
<dbReference type="EMBL" id="CP001013">
    <property type="protein sequence ID" value="ACB34349.1"/>
    <property type="molecule type" value="Genomic_DNA"/>
</dbReference>
<dbReference type="RefSeq" id="WP_012347109.1">
    <property type="nucleotide sequence ID" value="NC_010524.1"/>
</dbReference>
<dbReference type="SMR" id="B1Y250"/>
<dbReference type="STRING" id="395495.Lcho_2082"/>
<dbReference type="MEROPS" id="S24.001"/>
<dbReference type="KEGG" id="lch:Lcho_2082"/>
<dbReference type="eggNOG" id="COG1974">
    <property type="taxonomic scope" value="Bacteria"/>
</dbReference>
<dbReference type="HOGENOM" id="CLU_066192_45_3_4"/>
<dbReference type="OrthoDB" id="9802364at2"/>
<dbReference type="Proteomes" id="UP000001693">
    <property type="component" value="Chromosome"/>
</dbReference>
<dbReference type="GO" id="GO:0003677">
    <property type="term" value="F:DNA binding"/>
    <property type="evidence" value="ECO:0007669"/>
    <property type="project" value="UniProtKB-UniRule"/>
</dbReference>
<dbReference type="GO" id="GO:0004252">
    <property type="term" value="F:serine-type endopeptidase activity"/>
    <property type="evidence" value="ECO:0007669"/>
    <property type="project" value="UniProtKB-UniRule"/>
</dbReference>
<dbReference type="GO" id="GO:0006281">
    <property type="term" value="P:DNA repair"/>
    <property type="evidence" value="ECO:0007669"/>
    <property type="project" value="UniProtKB-UniRule"/>
</dbReference>
<dbReference type="GO" id="GO:0006260">
    <property type="term" value="P:DNA replication"/>
    <property type="evidence" value="ECO:0007669"/>
    <property type="project" value="UniProtKB-UniRule"/>
</dbReference>
<dbReference type="GO" id="GO:0045892">
    <property type="term" value="P:negative regulation of DNA-templated transcription"/>
    <property type="evidence" value="ECO:0007669"/>
    <property type="project" value="UniProtKB-UniRule"/>
</dbReference>
<dbReference type="GO" id="GO:0006508">
    <property type="term" value="P:proteolysis"/>
    <property type="evidence" value="ECO:0007669"/>
    <property type="project" value="InterPro"/>
</dbReference>
<dbReference type="GO" id="GO:0009432">
    <property type="term" value="P:SOS response"/>
    <property type="evidence" value="ECO:0007669"/>
    <property type="project" value="UniProtKB-UniRule"/>
</dbReference>
<dbReference type="CDD" id="cd06529">
    <property type="entry name" value="S24_LexA-like"/>
    <property type="match status" value="1"/>
</dbReference>
<dbReference type="FunFam" id="1.10.10.10:FF:000009">
    <property type="entry name" value="LexA repressor"/>
    <property type="match status" value="1"/>
</dbReference>
<dbReference type="FunFam" id="2.10.109.10:FF:000001">
    <property type="entry name" value="LexA repressor"/>
    <property type="match status" value="1"/>
</dbReference>
<dbReference type="Gene3D" id="2.10.109.10">
    <property type="entry name" value="Umud Fragment, subunit A"/>
    <property type="match status" value="1"/>
</dbReference>
<dbReference type="Gene3D" id="1.10.10.10">
    <property type="entry name" value="Winged helix-like DNA-binding domain superfamily/Winged helix DNA-binding domain"/>
    <property type="match status" value="1"/>
</dbReference>
<dbReference type="HAMAP" id="MF_00015">
    <property type="entry name" value="LexA"/>
    <property type="match status" value="1"/>
</dbReference>
<dbReference type="InterPro" id="IPR006200">
    <property type="entry name" value="LexA"/>
</dbReference>
<dbReference type="InterPro" id="IPR039418">
    <property type="entry name" value="LexA-like"/>
</dbReference>
<dbReference type="InterPro" id="IPR036286">
    <property type="entry name" value="LexA/Signal_pep-like_sf"/>
</dbReference>
<dbReference type="InterPro" id="IPR006199">
    <property type="entry name" value="LexA_DNA-bd_dom"/>
</dbReference>
<dbReference type="InterPro" id="IPR050077">
    <property type="entry name" value="LexA_repressor"/>
</dbReference>
<dbReference type="InterPro" id="IPR006197">
    <property type="entry name" value="Peptidase_S24_LexA"/>
</dbReference>
<dbReference type="InterPro" id="IPR015927">
    <property type="entry name" value="Peptidase_S24_S26A/B/C"/>
</dbReference>
<dbReference type="InterPro" id="IPR036388">
    <property type="entry name" value="WH-like_DNA-bd_sf"/>
</dbReference>
<dbReference type="InterPro" id="IPR036390">
    <property type="entry name" value="WH_DNA-bd_sf"/>
</dbReference>
<dbReference type="NCBIfam" id="TIGR00498">
    <property type="entry name" value="lexA"/>
    <property type="match status" value="1"/>
</dbReference>
<dbReference type="PANTHER" id="PTHR33516">
    <property type="entry name" value="LEXA REPRESSOR"/>
    <property type="match status" value="1"/>
</dbReference>
<dbReference type="PANTHER" id="PTHR33516:SF2">
    <property type="entry name" value="LEXA REPRESSOR-RELATED"/>
    <property type="match status" value="1"/>
</dbReference>
<dbReference type="Pfam" id="PF01726">
    <property type="entry name" value="LexA_DNA_bind"/>
    <property type="match status" value="1"/>
</dbReference>
<dbReference type="Pfam" id="PF00717">
    <property type="entry name" value="Peptidase_S24"/>
    <property type="match status" value="1"/>
</dbReference>
<dbReference type="PRINTS" id="PR00726">
    <property type="entry name" value="LEXASERPTASE"/>
</dbReference>
<dbReference type="SUPFAM" id="SSF51306">
    <property type="entry name" value="LexA/Signal peptidase"/>
    <property type="match status" value="1"/>
</dbReference>
<dbReference type="SUPFAM" id="SSF46785">
    <property type="entry name" value="Winged helix' DNA-binding domain"/>
    <property type="match status" value="1"/>
</dbReference>
<sequence length="231" mass="25315">MQDSPKLTARQQQILDLIQSTIERTGAPPTRAEIATEFGFRSANAAEEHLQALARKGVIELLGGTSRGIRLKSDTLRSINESRLRGIGQQFSLPLSNMPPAQLTLPLVGRVAAGSPILAQQHIDQSYTFEAHMFSRKPDFLLKVRGMSMRDAGILDGDLIAVQRASEAKNGQIVVARLGDEVTVKRWRRSKSGIDLIPENPDFDIIHVPADSPDFALEGLAVGLIRNTMLM</sequence>